<comment type="function">
    <text evidence="1">Catalyzes the formation of S-adenosylmethionine (AdoMet) from methionine and ATP. The overall synthetic reaction is composed of two sequential steps, AdoMet formation and the subsequent tripolyphosphate hydrolysis which occurs prior to release of AdoMet from the enzyme.</text>
</comment>
<comment type="catalytic activity">
    <reaction evidence="1">
        <text>L-methionine + ATP + H2O = S-adenosyl-L-methionine + phosphate + diphosphate</text>
        <dbReference type="Rhea" id="RHEA:21080"/>
        <dbReference type="ChEBI" id="CHEBI:15377"/>
        <dbReference type="ChEBI" id="CHEBI:30616"/>
        <dbReference type="ChEBI" id="CHEBI:33019"/>
        <dbReference type="ChEBI" id="CHEBI:43474"/>
        <dbReference type="ChEBI" id="CHEBI:57844"/>
        <dbReference type="ChEBI" id="CHEBI:59789"/>
        <dbReference type="EC" id="2.5.1.6"/>
    </reaction>
</comment>
<comment type="cofactor">
    <cofactor evidence="1">
        <name>Mg(2+)</name>
        <dbReference type="ChEBI" id="CHEBI:18420"/>
    </cofactor>
    <text evidence="1">Binds 2 divalent ions per subunit.</text>
</comment>
<comment type="cofactor">
    <cofactor evidence="1">
        <name>K(+)</name>
        <dbReference type="ChEBI" id="CHEBI:29103"/>
    </cofactor>
    <text evidence="1">Binds 1 potassium ion per subunit.</text>
</comment>
<comment type="pathway">
    <text evidence="1">Amino-acid biosynthesis; S-adenosyl-L-methionine biosynthesis; S-adenosyl-L-methionine from L-methionine: step 1/1.</text>
</comment>
<comment type="subunit">
    <text evidence="1">Homotetramer; dimer of dimers.</text>
</comment>
<comment type="subcellular location">
    <subcellularLocation>
        <location evidence="1">Cytoplasm</location>
    </subcellularLocation>
</comment>
<comment type="similarity">
    <text evidence="1">Belongs to the AdoMet synthase family.</text>
</comment>
<feature type="chain" id="PRO_0000302992" description="S-adenosylmethionine synthase">
    <location>
        <begin position="1"/>
        <end position="396"/>
    </location>
</feature>
<feature type="region of interest" description="Flexible loop" evidence="1">
    <location>
        <begin position="100"/>
        <end position="110"/>
    </location>
</feature>
<feature type="binding site" description="in other chain" evidence="1">
    <location>
        <position position="16"/>
    </location>
    <ligand>
        <name>ATP</name>
        <dbReference type="ChEBI" id="CHEBI:30616"/>
        <note>ligand shared between two neighboring subunits</note>
    </ligand>
</feature>
<feature type="binding site" evidence="1">
    <location>
        <position position="18"/>
    </location>
    <ligand>
        <name>Mg(2+)</name>
        <dbReference type="ChEBI" id="CHEBI:18420"/>
    </ligand>
</feature>
<feature type="binding site" evidence="1">
    <location>
        <position position="44"/>
    </location>
    <ligand>
        <name>K(+)</name>
        <dbReference type="ChEBI" id="CHEBI:29103"/>
    </ligand>
</feature>
<feature type="binding site" description="in other chain" evidence="1">
    <location>
        <position position="57"/>
    </location>
    <ligand>
        <name>L-methionine</name>
        <dbReference type="ChEBI" id="CHEBI:57844"/>
        <note>ligand shared between two neighboring subunits</note>
    </ligand>
</feature>
<feature type="binding site" description="in other chain" evidence="1">
    <location>
        <position position="100"/>
    </location>
    <ligand>
        <name>L-methionine</name>
        <dbReference type="ChEBI" id="CHEBI:57844"/>
        <note>ligand shared between two neighboring subunits</note>
    </ligand>
</feature>
<feature type="binding site" description="in other chain" evidence="1">
    <location>
        <begin position="175"/>
        <end position="177"/>
    </location>
    <ligand>
        <name>ATP</name>
        <dbReference type="ChEBI" id="CHEBI:30616"/>
        <note>ligand shared between two neighboring subunits</note>
    </ligand>
</feature>
<feature type="binding site" description="in other chain" evidence="1">
    <location>
        <begin position="242"/>
        <end position="243"/>
    </location>
    <ligand>
        <name>ATP</name>
        <dbReference type="ChEBI" id="CHEBI:30616"/>
        <note>ligand shared between two neighboring subunits</note>
    </ligand>
</feature>
<feature type="binding site" evidence="1">
    <location>
        <position position="251"/>
    </location>
    <ligand>
        <name>ATP</name>
        <dbReference type="ChEBI" id="CHEBI:30616"/>
        <note>ligand shared between two neighboring subunits</note>
    </ligand>
</feature>
<feature type="binding site" evidence="1">
    <location>
        <position position="251"/>
    </location>
    <ligand>
        <name>L-methionine</name>
        <dbReference type="ChEBI" id="CHEBI:57844"/>
        <note>ligand shared between two neighboring subunits</note>
    </ligand>
</feature>
<feature type="binding site" description="in other chain" evidence="1">
    <location>
        <begin position="257"/>
        <end position="258"/>
    </location>
    <ligand>
        <name>ATP</name>
        <dbReference type="ChEBI" id="CHEBI:30616"/>
        <note>ligand shared between two neighboring subunits</note>
    </ligand>
</feature>
<feature type="binding site" evidence="1">
    <location>
        <position position="274"/>
    </location>
    <ligand>
        <name>ATP</name>
        <dbReference type="ChEBI" id="CHEBI:30616"/>
        <note>ligand shared between two neighboring subunits</note>
    </ligand>
</feature>
<feature type="binding site" evidence="1">
    <location>
        <position position="278"/>
    </location>
    <ligand>
        <name>ATP</name>
        <dbReference type="ChEBI" id="CHEBI:30616"/>
        <note>ligand shared between two neighboring subunits</note>
    </ligand>
</feature>
<feature type="binding site" description="in other chain" evidence="1">
    <location>
        <position position="282"/>
    </location>
    <ligand>
        <name>L-methionine</name>
        <dbReference type="ChEBI" id="CHEBI:57844"/>
        <note>ligand shared between two neighboring subunits</note>
    </ligand>
</feature>
<protein>
    <recommendedName>
        <fullName evidence="1">S-adenosylmethionine synthase</fullName>
        <shortName evidence="1">AdoMet synthase</shortName>
        <ecNumber evidence="1">2.5.1.6</ecNumber>
    </recommendedName>
    <alternativeName>
        <fullName evidence="1">MAT</fullName>
    </alternativeName>
    <alternativeName>
        <fullName evidence="1">Methionine adenosyltransferase</fullName>
    </alternativeName>
</protein>
<accession>A3CNY4</accession>
<reference key="1">
    <citation type="journal article" date="2007" name="J. Bacteriol.">
        <title>Genome of the opportunistic pathogen Streptococcus sanguinis.</title>
        <authorList>
            <person name="Xu P."/>
            <person name="Alves J.M."/>
            <person name="Kitten T."/>
            <person name="Brown A."/>
            <person name="Chen Z."/>
            <person name="Ozaki L.S."/>
            <person name="Manque P."/>
            <person name="Ge X."/>
            <person name="Serrano M.G."/>
            <person name="Puiu D."/>
            <person name="Hendricks S."/>
            <person name="Wang Y."/>
            <person name="Chaplin M.D."/>
            <person name="Akan D."/>
            <person name="Paik S."/>
            <person name="Peterson D.L."/>
            <person name="Macrina F.L."/>
            <person name="Buck G.A."/>
        </authorList>
    </citation>
    <scope>NUCLEOTIDE SEQUENCE [LARGE SCALE GENOMIC DNA]</scope>
    <source>
        <strain>SK36</strain>
    </source>
</reference>
<evidence type="ECO:0000255" key="1">
    <source>
        <dbReference type="HAMAP-Rule" id="MF_00086"/>
    </source>
</evidence>
<proteinExistence type="inferred from homology"/>
<keyword id="KW-0067">ATP-binding</keyword>
<keyword id="KW-0963">Cytoplasm</keyword>
<keyword id="KW-0460">Magnesium</keyword>
<keyword id="KW-0479">Metal-binding</keyword>
<keyword id="KW-0547">Nucleotide-binding</keyword>
<keyword id="KW-0554">One-carbon metabolism</keyword>
<keyword id="KW-0630">Potassium</keyword>
<keyword id="KW-1185">Reference proteome</keyword>
<keyword id="KW-0808">Transferase</keyword>
<gene>
    <name evidence="1" type="primary">metK</name>
    <name type="ordered locus">SSA_1495</name>
</gene>
<dbReference type="EC" id="2.5.1.6" evidence="1"/>
<dbReference type="EMBL" id="CP000387">
    <property type="protein sequence ID" value="ABN44889.1"/>
    <property type="molecule type" value="Genomic_DNA"/>
</dbReference>
<dbReference type="RefSeq" id="WP_011837180.1">
    <property type="nucleotide sequence ID" value="NC_009009.1"/>
</dbReference>
<dbReference type="RefSeq" id="YP_001035439.1">
    <property type="nucleotide sequence ID" value="NC_009009.1"/>
</dbReference>
<dbReference type="SMR" id="A3CNY4"/>
<dbReference type="STRING" id="388919.SSA_1495"/>
<dbReference type="KEGG" id="ssa:SSA_1495"/>
<dbReference type="PATRIC" id="fig|388919.9.peg.1420"/>
<dbReference type="eggNOG" id="COG0192">
    <property type="taxonomic scope" value="Bacteria"/>
</dbReference>
<dbReference type="HOGENOM" id="CLU_041802_1_1_9"/>
<dbReference type="OrthoDB" id="9801686at2"/>
<dbReference type="UniPathway" id="UPA00315">
    <property type="reaction ID" value="UER00080"/>
</dbReference>
<dbReference type="Proteomes" id="UP000002148">
    <property type="component" value="Chromosome"/>
</dbReference>
<dbReference type="GO" id="GO:0005737">
    <property type="term" value="C:cytoplasm"/>
    <property type="evidence" value="ECO:0007669"/>
    <property type="project" value="UniProtKB-SubCell"/>
</dbReference>
<dbReference type="GO" id="GO:0005524">
    <property type="term" value="F:ATP binding"/>
    <property type="evidence" value="ECO:0007669"/>
    <property type="project" value="UniProtKB-UniRule"/>
</dbReference>
<dbReference type="GO" id="GO:0000287">
    <property type="term" value="F:magnesium ion binding"/>
    <property type="evidence" value="ECO:0007669"/>
    <property type="project" value="UniProtKB-UniRule"/>
</dbReference>
<dbReference type="GO" id="GO:0004478">
    <property type="term" value="F:methionine adenosyltransferase activity"/>
    <property type="evidence" value="ECO:0007669"/>
    <property type="project" value="UniProtKB-UniRule"/>
</dbReference>
<dbReference type="GO" id="GO:0006730">
    <property type="term" value="P:one-carbon metabolic process"/>
    <property type="evidence" value="ECO:0007669"/>
    <property type="project" value="UniProtKB-KW"/>
</dbReference>
<dbReference type="GO" id="GO:0006556">
    <property type="term" value="P:S-adenosylmethionine biosynthetic process"/>
    <property type="evidence" value="ECO:0007669"/>
    <property type="project" value="UniProtKB-UniRule"/>
</dbReference>
<dbReference type="CDD" id="cd18079">
    <property type="entry name" value="S-AdoMet_synt"/>
    <property type="match status" value="1"/>
</dbReference>
<dbReference type="FunFam" id="3.30.300.10:FF:000003">
    <property type="entry name" value="S-adenosylmethionine synthase"/>
    <property type="match status" value="1"/>
</dbReference>
<dbReference type="Gene3D" id="3.30.300.10">
    <property type="match status" value="3"/>
</dbReference>
<dbReference type="HAMAP" id="MF_00086">
    <property type="entry name" value="S_AdoMet_synth1"/>
    <property type="match status" value="1"/>
</dbReference>
<dbReference type="InterPro" id="IPR022631">
    <property type="entry name" value="ADOMET_SYNTHASE_CS"/>
</dbReference>
<dbReference type="InterPro" id="IPR022630">
    <property type="entry name" value="S-AdoMet_synt_C"/>
</dbReference>
<dbReference type="InterPro" id="IPR022629">
    <property type="entry name" value="S-AdoMet_synt_central"/>
</dbReference>
<dbReference type="InterPro" id="IPR022628">
    <property type="entry name" value="S-AdoMet_synt_N"/>
</dbReference>
<dbReference type="InterPro" id="IPR002133">
    <property type="entry name" value="S-AdoMet_synthetase"/>
</dbReference>
<dbReference type="InterPro" id="IPR022636">
    <property type="entry name" value="S-AdoMet_synthetase_sfam"/>
</dbReference>
<dbReference type="NCBIfam" id="TIGR01034">
    <property type="entry name" value="metK"/>
    <property type="match status" value="1"/>
</dbReference>
<dbReference type="PANTHER" id="PTHR11964">
    <property type="entry name" value="S-ADENOSYLMETHIONINE SYNTHETASE"/>
    <property type="match status" value="1"/>
</dbReference>
<dbReference type="Pfam" id="PF02773">
    <property type="entry name" value="S-AdoMet_synt_C"/>
    <property type="match status" value="1"/>
</dbReference>
<dbReference type="Pfam" id="PF02772">
    <property type="entry name" value="S-AdoMet_synt_M"/>
    <property type="match status" value="1"/>
</dbReference>
<dbReference type="Pfam" id="PF00438">
    <property type="entry name" value="S-AdoMet_synt_N"/>
    <property type="match status" value="1"/>
</dbReference>
<dbReference type="PIRSF" id="PIRSF000497">
    <property type="entry name" value="MAT"/>
    <property type="match status" value="1"/>
</dbReference>
<dbReference type="SUPFAM" id="SSF55973">
    <property type="entry name" value="S-adenosylmethionine synthetase"/>
    <property type="match status" value="3"/>
</dbReference>
<dbReference type="PROSITE" id="PS00376">
    <property type="entry name" value="ADOMET_SYNTHASE_1"/>
    <property type="match status" value="1"/>
</dbReference>
<dbReference type="PROSITE" id="PS00377">
    <property type="entry name" value="ADOMET_SYNTHASE_2"/>
    <property type="match status" value="1"/>
</dbReference>
<organism>
    <name type="scientific">Streptococcus sanguinis (strain SK36)</name>
    <dbReference type="NCBI Taxonomy" id="388919"/>
    <lineage>
        <taxon>Bacteria</taxon>
        <taxon>Bacillati</taxon>
        <taxon>Bacillota</taxon>
        <taxon>Bacilli</taxon>
        <taxon>Lactobacillales</taxon>
        <taxon>Streptococcaceae</taxon>
        <taxon>Streptococcus</taxon>
    </lineage>
</organism>
<name>METK_STRSV</name>
<sequence length="396" mass="42950">MSERKLFTSESVSEGHPDKIADQISDAILDAVLSQDPDAHVAAETAVYTGSVHVFGEISTTAYVDINRVVRDTIAEIGYTNTEYGFSAETVGVHPSLVEQSPDIAQGVNEALEVRGNADQDPLDLIGAGDQGLMFGFAVDETPELMPLPISLSHKLVRRLAELRKSGEIAYLRPDAKSQVTVEYDENDQPVRVDTVVISTQHDPDATNEEIHRDVIEKVIKAVIPAQYLDDKTKFFINPTGRFVIGGPQGDSGLTGRKIIVDTYGGYARHGGGAFSGKDATKVDRSASYAARYIAKNIVAAGLAKKAEVQLAYAIGVAQPVSVRIDTFGTGTVAESKLQEAVRQIFDLRPAGIIQMLDLKRPIYRQTAAYGHMGRTDIDLPWEKLDKVEALKAAVQ</sequence>